<organism>
    <name type="scientific">Drosophila melanogaster</name>
    <name type="common">Fruit fly</name>
    <dbReference type="NCBI Taxonomy" id="7227"/>
    <lineage>
        <taxon>Eukaryota</taxon>
        <taxon>Metazoa</taxon>
        <taxon>Ecdysozoa</taxon>
        <taxon>Arthropoda</taxon>
        <taxon>Hexapoda</taxon>
        <taxon>Insecta</taxon>
        <taxon>Pterygota</taxon>
        <taxon>Neoptera</taxon>
        <taxon>Endopterygota</taxon>
        <taxon>Diptera</taxon>
        <taxon>Brachycera</taxon>
        <taxon>Muscomorpha</taxon>
        <taxon>Ephydroidea</taxon>
        <taxon>Drosophilidae</taxon>
        <taxon>Drosophila</taxon>
        <taxon>Sophophora</taxon>
    </lineage>
</organism>
<evidence type="ECO:0000269" key="1">
    <source>
    </source>
</evidence>
<evidence type="ECO:0000269" key="2">
    <source>
    </source>
</evidence>
<evidence type="ECO:0000305" key="3"/>
<keyword id="KW-0002">3D-structure</keyword>
<keyword id="KW-0597">Phosphoprotein</keyword>
<keyword id="KW-1185">Reference proteome</keyword>
<keyword id="KW-0687">Ribonucleoprotein</keyword>
<keyword id="KW-0689">Ribosomal protein</keyword>
<proteinExistence type="evidence at protein level"/>
<gene>
    <name type="primary">RpS20</name>
    <name type="ORF">CG15693</name>
</gene>
<comment type="interaction">
    <interactant intactId="EBI-163101">
        <id>P55828</id>
    </interactant>
    <interactant intactId="EBI-15129664">
        <id>Q8T389</id>
        <label>EndoB</label>
    </interactant>
    <organismsDiffer>false</organismsDiffer>
    <experiments>4</experiments>
</comment>
<comment type="tissue specificity">
    <text evidence="2">Expressed ubiquitously in embryos, highest expression is in the midgut.</text>
</comment>
<comment type="similarity">
    <text evidence="3">Belongs to the universal ribosomal protein uS10 family.</text>
</comment>
<sequence>MAAAPKDIEKPHVGDSASVHRIRITLTSRNVRSLENVCRDLINGAKNQNLRVKGPVRMPTKTLRITTRKTPCGEGSKTWDRFQMRIHKRIIDLHSPSEIVKKITSINIEPGVEVEVTIAN</sequence>
<dbReference type="EMBL" id="Y11119">
    <property type="protein sequence ID" value="CAA72004.1"/>
    <property type="molecule type" value="mRNA"/>
</dbReference>
<dbReference type="EMBL" id="AE014297">
    <property type="protein sequence ID" value="AAF55809.1"/>
    <property type="molecule type" value="Genomic_DNA"/>
</dbReference>
<dbReference type="EMBL" id="AY071353">
    <property type="protein sequence ID" value="AAL48975.1"/>
    <property type="molecule type" value="mRNA"/>
</dbReference>
<dbReference type="EMBL" id="AY071742">
    <property type="protein sequence ID" value="AAL49364.1"/>
    <property type="molecule type" value="mRNA"/>
</dbReference>
<dbReference type="RefSeq" id="NP_524421.1">
    <property type="nucleotide sequence ID" value="NM_079697.3"/>
</dbReference>
<dbReference type="PDB" id="4V6W">
    <property type="method" value="EM"/>
    <property type="resolution" value="6.00 A"/>
    <property type="chains" value="AU=1-120"/>
</dbReference>
<dbReference type="PDB" id="6XU6">
    <property type="method" value="EM"/>
    <property type="resolution" value="3.50 A"/>
    <property type="chains" value="AU=18-119"/>
</dbReference>
<dbReference type="PDB" id="6XU7">
    <property type="method" value="EM"/>
    <property type="resolution" value="4.90 A"/>
    <property type="chains" value="AU=18-119"/>
</dbReference>
<dbReference type="PDB" id="6XU8">
    <property type="method" value="EM"/>
    <property type="resolution" value="3.00 A"/>
    <property type="chains" value="AU=18-119"/>
</dbReference>
<dbReference type="PDBsum" id="4V6W"/>
<dbReference type="PDBsum" id="6XU6"/>
<dbReference type="PDBsum" id="6XU7"/>
<dbReference type="PDBsum" id="6XU8"/>
<dbReference type="EMDB" id="EMD-10622"/>
<dbReference type="EMDB" id="EMD-10623"/>
<dbReference type="EMDB" id="EMD-10624"/>
<dbReference type="SMR" id="P55828"/>
<dbReference type="BioGRID" id="67437">
    <property type="interactions" value="133"/>
</dbReference>
<dbReference type="DIP" id="DIP-18789N"/>
<dbReference type="FunCoup" id="P55828">
    <property type="interactions" value="1017"/>
</dbReference>
<dbReference type="IntAct" id="P55828">
    <property type="interactions" value="15"/>
</dbReference>
<dbReference type="STRING" id="7227.FBpp0083371"/>
<dbReference type="iPTMnet" id="P55828"/>
<dbReference type="PaxDb" id="7227-FBpp0083371"/>
<dbReference type="DNASU" id="42464"/>
<dbReference type="EnsemblMetazoa" id="FBtr0083964">
    <property type="protein sequence ID" value="FBpp0083371"/>
    <property type="gene ID" value="FBgn0019936"/>
</dbReference>
<dbReference type="GeneID" id="42464"/>
<dbReference type="KEGG" id="dme:Dmel_CG15693"/>
<dbReference type="AGR" id="FB:FBgn0019936"/>
<dbReference type="CTD" id="6224"/>
<dbReference type="FlyBase" id="FBgn0019936">
    <property type="gene designation" value="RpS20"/>
</dbReference>
<dbReference type="VEuPathDB" id="VectorBase:FBgn0019936"/>
<dbReference type="eggNOG" id="KOG0900">
    <property type="taxonomic scope" value="Eukaryota"/>
</dbReference>
<dbReference type="GeneTree" id="ENSGT00390000003248"/>
<dbReference type="HOGENOM" id="CLU_122625_0_0_1"/>
<dbReference type="InParanoid" id="P55828"/>
<dbReference type="OMA" id="IHKRVIH"/>
<dbReference type="OrthoDB" id="10248551at2759"/>
<dbReference type="PhylomeDB" id="P55828"/>
<dbReference type="Reactome" id="R-DME-156827">
    <property type="pathway name" value="L13a-mediated translational silencing of Ceruloplasmin expression"/>
</dbReference>
<dbReference type="Reactome" id="R-DME-1799339">
    <property type="pathway name" value="SRP-dependent cotranslational protein targeting to membrane"/>
</dbReference>
<dbReference type="Reactome" id="R-DME-72649">
    <property type="pathway name" value="Translation initiation complex formation"/>
</dbReference>
<dbReference type="Reactome" id="R-DME-72689">
    <property type="pathway name" value="Formation of a pool of free 40S subunits"/>
</dbReference>
<dbReference type="Reactome" id="R-DME-72695">
    <property type="pathway name" value="Formation of the ternary complex, and subsequently, the 43S complex"/>
</dbReference>
<dbReference type="Reactome" id="R-DME-72702">
    <property type="pathway name" value="Ribosomal scanning and start codon recognition"/>
</dbReference>
<dbReference type="Reactome" id="R-DME-72706">
    <property type="pathway name" value="GTP hydrolysis and joining of the 60S ribosomal subunit"/>
</dbReference>
<dbReference type="Reactome" id="R-DME-975956">
    <property type="pathway name" value="Nonsense Mediated Decay (NMD) independent of the Exon Junction Complex (EJC)"/>
</dbReference>
<dbReference type="Reactome" id="R-DME-975957">
    <property type="pathway name" value="Nonsense Mediated Decay (NMD) enhanced by the Exon Junction Complex (EJC)"/>
</dbReference>
<dbReference type="SignaLink" id="P55828"/>
<dbReference type="BioGRID-ORCS" id="42464">
    <property type="hits" value="1 hit in 1 CRISPR screen"/>
</dbReference>
<dbReference type="ChiTaRS" id="RpS20">
    <property type="organism name" value="fly"/>
</dbReference>
<dbReference type="GenomeRNAi" id="42464"/>
<dbReference type="PRO" id="PR:P55828"/>
<dbReference type="Proteomes" id="UP000000803">
    <property type="component" value="Chromosome 3R"/>
</dbReference>
<dbReference type="Bgee" id="FBgn0019936">
    <property type="expression patterns" value="Expressed in adult enteroendocrine precursor cell in adult midgut (Drosophila) and 274 other cell types or tissues"/>
</dbReference>
<dbReference type="ExpressionAtlas" id="P55828">
    <property type="expression patterns" value="baseline and differential"/>
</dbReference>
<dbReference type="GO" id="GO:0022626">
    <property type="term" value="C:cytosolic ribosome"/>
    <property type="evidence" value="ECO:0000314"/>
    <property type="project" value="FlyBase"/>
</dbReference>
<dbReference type="GO" id="GO:0022627">
    <property type="term" value="C:cytosolic small ribosomal subunit"/>
    <property type="evidence" value="ECO:0000318"/>
    <property type="project" value="GO_Central"/>
</dbReference>
<dbReference type="GO" id="GO:0015935">
    <property type="term" value="C:small ribosomal subunit"/>
    <property type="evidence" value="ECO:0000303"/>
    <property type="project" value="UniProtKB"/>
</dbReference>
<dbReference type="GO" id="GO:0003723">
    <property type="term" value="F:RNA binding"/>
    <property type="evidence" value="ECO:0007669"/>
    <property type="project" value="InterPro"/>
</dbReference>
<dbReference type="GO" id="GO:0003735">
    <property type="term" value="F:structural constituent of ribosome"/>
    <property type="evidence" value="ECO:0000314"/>
    <property type="project" value="FlyBase"/>
</dbReference>
<dbReference type="GO" id="GO:0002181">
    <property type="term" value="P:cytoplasmic translation"/>
    <property type="evidence" value="ECO:0000304"/>
    <property type="project" value="FlyBase"/>
</dbReference>
<dbReference type="GO" id="GO:0006412">
    <property type="term" value="P:translation"/>
    <property type="evidence" value="ECO:0000303"/>
    <property type="project" value="UniProtKB"/>
</dbReference>
<dbReference type="FunFam" id="3.30.70.600:FF:000002">
    <property type="entry name" value="40S ribosomal protein S20"/>
    <property type="match status" value="1"/>
</dbReference>
<dbReference type="Gene3D" id="3.30.70.600">
    <property type="entry name" value="Ribosomal protein S10 domain"/>
    <property type="match status" value="1"/>
</dbReference>
<dbReference type="HAMAP" id="MF_00508">
    <property type="entry name" value="Ribosomal_uS10"/>
    <property type="match status" value="1"/>
</dbReference>
<dbReference type="InterPro" id="IPR001848">
    <property type="entry name" value="Ribosomal_uS10"/>
</dbReference>
<dbReference type="InterPro" id="IPR018268">
    <property type="entry name" value="Ribosomal_uS10_CS"/>
</dbReference>
<dbReference type="InterPro" id="IPR027486">
    <property type="entry name" value="Ribosomal_uS10_dom"/>
</dbReference>
<dbReference type="InterPro" id="IPR036838">
    <property type="entry name" value="Ribosomal_uS10_dom_sf"/>
</dbReference>
<dbReference type="InterPro" id="IPR005729">
    <property type="entry name" value="Ribosomal_uS10_euk/arc"/>
</dbReference>
<dbReference type="NCBIfam" id="TIGR01046">
    <property type="entry name" value="uS10_euk_arch"/>
    <property type="match status" value="1"/>
</dbReference>
<dbReference type="PANTHER" id="PTHR11700">
    <property type="entry name" value="30S RIBOSOMAL PROTEIN S10 FAMILY MEMBER"/>
    <property type="match status" value="1"/>
</dbReference>
<dbReference type="Pfam" id="PF00338">
    <property type="entry name" value="Ribosomal_S10"/>
    <property type="match status" value="1"/>
</dbReference>
<dbReference type="PRINTS" id="PR00971">
    <property type="entry name" value="RIBOSOMALS10"/>
</dbReference>
<dbReference type="SMART" id="SM01403">
    <property type="entry name" value="Ribosomal_S10"/>
    <property type="match status" value="1"/>
</dbReference>
<dbReference type="SUPFAM" id="SSF54999">
    <property type="entry name" value="Ribosomal protein S10"/>
    <property type="match status" value="1"/>
</dbReference>
<dbReference type="PROSITE" id="PS00361">
    <property type="entry name" value="RIBOSOMAL_S10"/>
    <property type="match status" value="1"/>
</dbReference>
<accession>P55828</accession>
<accession>Q8SYS0</accession>
<accession>Q9VDI4</accession>
<reference key="1">
    <citation type="journal article" date="1997" name="Gene">
        <title>Identification and characterization of the gene for Drosophila S20 ribosomal protein.</title>
        <authorList>
            <person name="Chan E.H.Y."/>
            <person name="Zhang Y."/>
            <person name="O'Kane C.J."/>
        </authorList>
    </citation>
    <scope>NUCLEOTIDE SEQUENCE [MRNA]</scope>
    <scope>TISSUE SPECIFICITY</scope>
    <source>
        <tissue>Ovary</tissue>
    </source>
</reference>
<reference key="2">
    <citation type="journal article" date="2000" name="Science">
        <title>The genome sequence of Drosophila melanogaster.</title>
        <authorList>
            <person name="Adams M.D."/>
            <person name="Celniker S.E."/>
            <person name="Holt R.A."/>
            <person name="Evans C.A."/>
            <person name="Gocayne J.D."/>
            <person name="Amanatides P.G."/>
            <person name="Scherer S.E."/>
            <person name="Li P.W."/>
            <person name="Hoskins R.A."/>
            <person name="Galle R.F."/>
            <person name="George R.A."/>
            <person name="Lewis S.E."/>
            <person name="Richards S."/>
            <person name="Ashburner M."/>
            <person name="Henderson S.N."/>
            <person name="Sutton G.G."/>
            <person name="Wortman J.R."/>
            <person name="Yandell M.D."/>
            <person name="Zhang Q."/>
            <person name="Chen L.X."/>
            <person name="Brandon R.C."/>
            <person name="Rogers Y.-H.C."/>
            <person name="Blazej R.G."/>
            <person name="Champe M."/>
            <person name="Pfeiffer B.D."/>
            <person name="Wan K.H."/>
            <person name="Doyle C."/>
            <person name="Baxter E.G."/>
            <person name="Helt G."/>
            <person name="Nelson C.R."/>
            <person name="Miklos G.L.G."/>
            <person name="Abril J.F."/>
            <person name="Agbayani A."/>
            <person name="An H.-J."/>
            <person name="Andrews-Pfannkoch C."/>
            <person name="Baldwin D."/>
            <person name="Ballew R.M."/>
            <person name="Basu A."/>
            <person name="Baxendale J."/>
            <person name="Bayraktaroglu L."/>
            <person name="Beasley E.M."/>
            <person name="Beeson K.Y."/>
            <person name="Benos P.V."/>
            <person name="Berman B.P."/>
            <person name="Bhandari D."/>
            <person name="Bolshakov S."/>
            <person name="Borkova D."/>
            <person name="Botchan M.R."/>
            <person name="Bouck J."/>
            <person name="Brokstein P."/>
            <person name="Brottier P."/>
            <person name="Burtis K.C."/>
            <person name="Busam D.A."/>
            <person name="Butler H."/>
            <person name="Cadieu E."/>
            <person name="Center A."/>
            <person name="Chandra I."/>
            <person name="Cherry J.M."/>
            <person name="Cawley S."/>
            <person name="Dahlke C."/>
            <person name="Davenport L.B."/>
            <person name="Davies P."/>
            <person name="de Pablos B."/>
            <person name="Delcher A."/>
            <person name="Deng Z."/>
            <person name="Mays A.D."/>
            <person name="Dew I."/>
            <person name="Dietz S.M."/>
            <person name="Dodson K."/>
            <person name="Doup L.E."/>
            <person name="Downes M."/>
            <person name="Dugan-Rocha S."/>
            <person name="Dunkov B.C."/>
            <person name="Dunn P."/>
            <person name="Durbin K.J."/>
            <person name="Evangelista C.C."/>
            <person name="Ferraz C."/>
            <person name="Ferriera S."/>
            <person name="Fleischmann W."/>
            <person name="Fosler C."/>
            <person name="Gabrielian A.E."/>
            <person name="Garg N.S."/>
            <person name="Gelbart W.M."/>
            <person name="Glasser K."/>
            <person name="Glodek A."/>
            <person name="Gong F."/>
            <person name="Gorrell J.H."/>
            <person name="Gu Z."/>
            <person name="Guan P."/>
            <person name="Harris M."/>
            <person name="Harris N.L."/>
            <person name="Harvey D.A."/>
            <person name="Heiman T.J."/>
            <person name="Hernandez J.R."/>
            <person name="Houck J."/>
            <person name="Hostin D."/>
            <person name="Houston K.A."/>
            <person name="Howland T.J."/>
            <person name="Wei M.-H."/>
            <person name="Ibegwam C."/>
            <person name="Jalali M."/>
            <person name="Kalush F."/>
            <person name="Karpen G.H."/>
            <person name="Ke Z."/>
            <person name="Kennison J.A."/>
            <person name="Ketchum K.A."/>
            <person name="Kimmel B.E."/>
            <person name="Kodira C.D."/>
            <person name="Kraft C.L."/>
            <person name="Kravitz S."/>
            <person name="Kulp D."/>
            <person name="Lai Z."/>
            <person name="Lasko P."/>
            <person name="Lei Y."/>
            <person name="Levitsky A.A."/>
            <person name="Li J.H."/>
            <person name="Li Z."/>
            <person name="Liang Y."/>
            <person name="Lin X."/>
            <person name="Liu X."/>
            <person name="Mattei B."/>
            <person name="McIntosh T.C."/>
            <person name="McLeod M.P."/>
            <person name="McPherson D."/>
            <person name="Merkulov G."/>
            <person name="Milshina N.V."/>
            <person name="Mobarry C."/>
            <person name="Morris J."/>
            <person name="Moshrefi A."/>
            <person name="Mount S.M."/>
            <person name="Moy M."/>
            <person name="Murphy B."/>
            <person name="Murphy L."/>
            <person name="Muzny D.M."/>
            <person name="Nelson D.L."/>
            <person name="Nelson D.R."/>
            <person name="Nelson K.A."/>
            <person name="Nixon K."/>
            <person name="Nusskern D.R."/>
            <person name="Pacleb J.M."/>
            <person name="Palazzolo M."/>
            <person name="Pittman G.S."/>
            <person name="Pan S."/>
            <person name="Pollard J."/>
            <person name="Puri V."/>
            <person name="Reese M.G."/>
            <person name="Reinert K."/>
            <person name="Remington K."/>
            <person name="Saunders R.D.C."/>
            <person name="Scheeler F."/>
            <person name="Shen H."/>
            <person name="Shue B.C."/>
            <person name="Siden-Kiamos I."/>
            <person name="Simpson M."/>
            <person name="Skupski M.P."/>
            <person name="Smith T.J."/>
            <person name="Spier E."/>
            <person name="Spradling A.C."/>
            <person name="Stapleton M."/>
            <person name="Strong R."/>
            <person name="Sun E."/>
            <person name="Svirskas R."/>
            <person name="Tector C."/>
            <person name="Turner R."/>
            <person name="Venter E."/>
            <person name="Wang A.H."/>
            <person name="Wang X."/>
            <person name="Wang Z.-Y."/>
            <person name="Wassarman D.A."/>
            <person name="Weinstock G.M."/>
            <person name="Weissenbach J."/>
            <person name="Williams S.M."/>
            <person name="Woodage T."/>
            <person name="Worley K.C."/>
            <person name="Wu D."/>
            <person name="Yang S."/>
            <person name="Yao Q.A."/>
            <person name="Ye J."/>
            <person name="Yeh R.-F."/>
            <person name="Zaveri J.S."/>
            <person name="Zhan M."/>
            <person name="Zhang G."/>
            <person name="Zhao Q."/>
            <person name="Zheng L."/>
            <person name="Zheng X.H."/>
            <person name="Zhong F.N."/>
            <person name="Zhong W."/>
            <person name="Zhou X."/>
            <person name="Zhu S.C."/>
            <person name="Zhu X."/>
            <person name="Smith H.O."/>
            <person name="Gibbs R.A."/>
            <person name="Myers E.W."/>
            <person name="Rubin G.M."/>
            <person name="Venter J.C."/>
        </authorList>
    </citation>
    <scope>NUCLEOTIDE SEQUENCE [LARGE SCALE GENOMIC DNA]</scope>
    <source>
        <strain>Berkeley</strain>
    </source>
</reference>
<reference key="3">
    <citation type="journal article" date="2002" name="Genome Biol.">
        <title>Annotation of the Drosophila melanogaster euchromatic genome: a systematic review.</title>
        <authorList>
            <person name="Misra S."/>
            <person name="Crosby M.A."/>
            <person name="Mungall C.J."/>
            <person name="Matthews B.B."/>
            <person name="Campbell K.S."/>
            <person name="Hradecky P."/>
            <person name="Huang Y."/>
            <person name="Kaminker J.S."/>
            <person name="Millburn G.H."/>
            <person name="Prochnik S.E."/>
            <person name="Smith C.D."/>
            <person name="Tupy J.L."/>
            <person name="Whitfield E.J."/>
            <person name="Bayraktaroglu L."/>
            <person name="Berman B.P."/>
            <person name="Bettencourt B.R."/>
            <person name="Celniker S.E."/>
            <person name="de Grey A.D.N.J."/>
            <person name="Drysdale R.A."/>
            <person name="Harris N.L."/>
            <person name="Richter J."/>
            <person name="Russo S."/>
            <person name="Schroeder A.J."/>
            <person name="Shu S.Q."/>
            <person name="Stapleton M."/>
            <person name="Yamada C."/>
            <person name="Ashburner M."/>
            <person name="Gelbart W.M."/>
            <person name="Rubin G.M."/>
            <person name="Lewis S.E."/>
        </authorList>
    </citation>
    <scope>GENOME REANNOTATION</scope>
    <source>
        <strain>Berkeley</strain>
    </source>
</reference>
<reference key="4">
    <citation type="journal article" date="2002" name="Genome Biol.">
        <title>A Drosophila full-length cDNA resource.</title>
        <authorList>
            <person name="Stapleton M."/>
            <person name="Carlson J.W."/>
            <person name="Brokstein P."/>
            <person name="Yu C."/>
            <person name="Champe M."/>
            <person name="George R.A."/>
            <person name="Guarin H."/>
            <person name="Kronmiller B."/>
            <person name="Pacleb J.M."/>
            <person name="Park S."/>
            <person name="Wan K.H."/>
            <person name="Rubin G.M."/>
            <person name="Celniker S.E."/>
        </authorList>
    </citation>
    <scope>NUCLEOTIDE SEQUENCE [LARGE SCALE MRNA]</scope>
    <source>
        <strain>Berkeley</strain>
        <tissue>Embryo</tissue>
        <tissue>Head</tissue>
    </source>
</reference>
<reference key="5">
    <citation type="journal article" date="2008" name="J. Proteome Res.">
        <title>Phosphoproteome analysis of Drosophila melanogaster embryos.</title>
        <authorList>
            <person name="Zhai B."/>
            <person name="Villen J."/>
            <person name="Beausoleil S.A."/>
            <person name="Mintseris J."/>
            <person name="Gygi S.P."/>
        </authorList>
    </citation>
    <scope>PHOSPHORYLATION [LARGE SCALE ANALYSIS] AT SER-16 AND SER-18</scope>
    <scope>IDENTIFICATION BY MASS SPECTROMETRY</scope>
    <source>
        <tissue>Embryo</tissue>
    </source>
</reference>
<reference key="6">
    <citation type="journal article" date="2013" name="Nature">
        <title>Structures of the human and Drosophila 80S ribosome.</title>
        <authorList>
            <person name="Anger A.M."/>
            <person name="Armache J.P."/>
            <person name="Berninghausen O."/>
            <person name="Habeck M."/>
            <person name="Subklewe M."/>
            <person name="Wilson D.N."/>
            <person name="Beckmann R."/>
        </authorList>
    </citation>
    <scope>STRUCTURE BY ELECTRON MICROSCOPY (6.0 ANGSTROMS) OF THE 80S RIBOSOME</scope>
</reference>
<name>RS20_DROME</name>
<protein>
    <recommendedName>
        <fullName evidence="3">Small ribosomal subunit protein uS10</fullName>
    </recommendedName>
    <alternativeName>
        <fullName>40S ribosomal protein S20</fullName>
    </alternativeName>
</protein>
<feature type="chain" id="PRO_0000146687" description="Small ribosomal subunit protein uS10">
    <location>
        <begin position="1"/>
        <end position="120"/>
    </location>
</feature>
<feature type="modified residue" description="Phosphoserine" evidence="1">
    <location>
        <position position="16"/>
    </location>
</feature>
<feature type="modified residue" description="Phosphoserine" evidence="1">
    <location>
        <position position="18"/>
    </location>
</feature>
<feature type="sequence conflict" description="In Ref. 4; AAL48975." evidence="3" ref="4">
    <original>R</original>
    <variation>C</variation>
    <location>
        <position position="21"/>
    </location>
</feature>
<feature type="sequence conflict" description="In Ref. 4; AAL48975." evidence="3" ref="4">
    <original>K</original>
    <variation>E</variation>
    <location>
        <position position="53"/>
    </location>
</feature>